<evidence type="ECO:0000250" key="1">
    <source>
        <dbReference type="UniProtKB" id="A0A061I403"/>
    </source>
</evidence>
<evidence type="ECO:0000250" key="2">
    <source>
        <dbReference type="UniProtKB" id="Q8SWV6"/>
    </source>
</evidence>
<evidence type="ECO:0000250" key="3">
    <source>
        <dbReference type="UniProtKB" id="Q9BVA6"/>
    </source>
</evidence>
<evidence type="ECO:0000255" key="4"/>
<evidence type="ECO:0000255" key="5">
    <source>
        <dbReference type="PROSITE-ProRule" id="PRU00791"/>
    </source>
</evidence>
<evidence type="ECO:0000256" key="6">
    <source>
        <dbReference type="SAM" id="MobiDB-lite"/>
    </source>
</evidence>
<evidence type="ECO:0000305" key="7"/>
<dbReference type="EC" id="2.7.7.108" evidence="2"/>
<dbReference type="EC" id="3.1.4.-" evidence="1 2"/>
<dbReference type="EMBL" id="CH916368">
    <property type="protein sequence ID" value="EDW02970.1"/>
    <property type="molecule type" value="Genomic_DNA"/>
</dbReference>
<dbReference type="SMR" id="B4JBN5"/>
<dbReference type="FunCoup" id="B4JBN5">
    <property type="interactions" value="260"/>
</dbReference>
<dbReference type="STRING" id="7222.B4JBN5"/>
<dbReference type="EnsemblMetazoa" id="FBtr0146165">
    <property type="protein sequence ID" value="FBpp0144657"/>
    <property type="gene ID" value="FBgn0118232"/>
</dbReference>
<dbReference type="EnsemblMetazoa" id="FBtr0453775">
    <property type="protein sequence ID" value="FBpp0404414"/>
    <property type="gene ID" value="FBgn0118232"/>
</dbReference>
<dbReference type="EnsemblMetazoa" id="XM_001988067.3">
    <property type="protein sequence ID" value="XP_001988103.1"/>
    <property type="gene ID" value="LOC6562043"/>
</dbReference>
<dbReference type="EnsemblMetazoa" id="XM_032735753.2">
    <property type="protein sequence ID" value="XP_032591644.1"/>
    <property type="gene ID" value="LOC6562043"/>
</dbReference>
<dbReference type="GeneID" id="6562043"/>
<dbReference type="KEGG" id="dgr:6562043"/>
<dbReference type="CTD" id="33897"/>
<dbReference type="eggNOG" id="KOG3824">
    <property type="taxonomic scope" value="Eukaryota"/>
</dbReference>
<dbReference type="HOGENOM" id="CLU_040460_0_0_1"/>
<dbReference type="InParanoid" id="B4JBN5"/>
<dbReference type="OMA" id="QLRCQLW"/>
<dbReference type="OrthoDB" id="439046at2759"/>
<dbReference type="PhylomeDB" id="B4JBN5"/>
<dbReference type="Proteomes" id="UP000001070">
    <property type="component" value="Unassembled WGS sequence"/>
</dbReference>
<dbReference type="GO" id="GO:0005886">
    <property type="term" value="C:plasma membrane"/>
    <property type="evidence" value="ECO:0007669"/>
    <property type="project" value="EnsemblMetazoa"/>
</dbReference>
<dbReference type="GO" id="GO:0070733">
    <property type="term" value="F:AMPylase activity"/>
    <property type="evidence" value="ECO:0000250"/>
    <property type="project" value="UniProtKB"/>
</dbReference>
<dbReference type="GO" id="GO:0005524">
    <property type="term" value="F:ATP binding"/>
    <property type="evidence" value="ECO:0007669"/>
    <property type="project" value="UniProtKB-KW"/>
</dbReference>
<dbReference type="GO" id="GO:0030544">
    <property type="term" value="F:Hsp70 protein binding"/>
    <property type="evidence" value="ECO:0007669"/>
    <property type="project" value="EnsemblMetazoa"/>
</dbReference>
<dbReference type="GO" id="GO:0044603">
    <property type="term" value="F:protein adenylylhydrolase activity"/>
    <property type="evidence" value="ECO:0007669"/>
    <property type="project" value="EnsemblMetazoa"/>
</dbReference>
<dbReference type="GO" id="GO:0042803">
    <property type="term" value="F:protein homodimerization activity"/>
    <property type="evidence" value="ECO:0007669"/>
    <property type="project" value="EnsemblMetazoa"/>
</dbReference>
<dbReference type="GO" id="GO:0050908">
    <property type="term" value="P:detection of light stimulus involved in visual perception"/>
    <property type="evidence" value="ECO:0007669"/>
    <property type="project" value="EnsemblMetazoa"/>
</dbReference>
<dbReference type="GO" id="GO:0051608">
    <property type="term" value="P:histamine transport"/>
    <property type="evidence" value="ECO:0007669"/>
    <property type="project" value="EnsemblMetazoa"/>
</dbReference>
<dbReference type="GO" id="GO:0018117">
    <property type="term" value="P:protein adenylylation"/>
    <property type="evidence" value="ECO:0000250"/>
    <property type="project" value="UniProtKB"/>
</dbReference>
<dbReference type="GO" id="GO:0034976">
    <property type="term" value="P:response to endoplasmic reticulum stress"/>
    <property type="evidence" value="ECO:0007669"/>
    <property type="project" value="EnsemblMetazoa"/>
</dbReference>
<dbReference type="GO" id="GO:0007632">
    <property type="term" value="P:visual behavior"/>
    <property type="evidence" value="ECO:0007669"/>
    <property type="project" value="EnsemblMetazoa"/>
</dbReference>
<dbReference type="FunFam" id="1.10.3290.10:FF:000001">
    <property type="entry name" value="adenosine monophosphate-protein transferase FICD"/>
    <property type="match status" value="1"/>
</dbReference>
<dbReference type="FunFam" id="1.25.40.10:FF:000522">
    <property type="entry name" value="Protein adenylyltransferase Fic"/>
    <property type="match status" value="1"/>
</dbReference>
<dbReference type="Gene3D" id="1.10.3290.10">
    <property type="entry name" value="Fido-like domain"/>
    <property type="match status" value="1"/>
</dbReference>
<dbReference type="Gene3D" id="1.25.40.10">
    <property type="entry name" value="Tetratricopeptide repeat domain"/>
    <property type="match status" value="1"/>
</dbReference>
<dbReference type="InterPro" id="IPR003812">
    <property type="entry name" value="Fido"/>
</dbReference>
<dbReference type="InterPro" id="IPR036597">
    <property type="entry name" value="Fido-like_dom_sf"/>
</dbReference>
<dbReference type="InterPro" id="IPR040198">
    <property type="entry name" value="Fido_containing"/>
</dbReference>
<dbReference type="InterPro" id="IPR011990">
    <property type="entry name" value="TPR-like_helical_dom_sf"/>
</dbReference>
<dbReference type="PANTHER" id="PTHR13504">
    <property type="entry name" value="FIDO DOMAIN-CONTAINING PROTEIN DDB_G0283145"/>
    <property type="match status" value="1"/>
</dbReference>
<dbReference type="PANTHER" id="PTHR13504:SF34">
    <property type="entry name" value="PROTEIN ADENYLYLTRANSFERASE FICD"/>
    <property type="match status" value="1"/>
</dbReference>
<dbReference type="Pfam" id="PF02661">
    <property type="entry name" value="Fic"/>
    <property type="match status" value="1"/>
</dbReference>
<dbReference type="SUPFAM" id="SSF140931">
    <property type="entry name" value="Fic-like"/>
    <property type="match status" value="1"/>
</dbReference>
<dbReference type="SUPFAM" id="SSF48452">
    <property type="entry name" value="TPR-like"/>
    <property type="match status" value="1"/>
</dbReference>
<dbReference type="PROSITE" id="PS51459">
    <property type="entry name" value="FIDO"/>
    <property type="match status" value="1"/>
</dbReference>
<dbReference type="PROSITE" id="PS50293">
    <property type="entry name" value="TPR_REGION"/>
    <property type="match status" value="1"/>
</dbReference>
<protein>
    <recommendedName>
        <fullName>Protein adenylyltransferase Fic</fullName>
        <ecNumber evidence="2">2.7.7.108</ecNumber>
    </recommendedName>
    <alternativeName>
        <fullName evidence="7">De-AMPylase Fic</fullName>
        <ecNumber evidence="1 2">3.1.4.-</ecNumber>
    </alternativeName>
</protein>
<accession>B4JBN5</accession>
<name>FICD_DROGR</name>
<proteinExistence type="inferred from homology"/>
<gene>
    <name type="ORF">GH10751</name>
</gene>
<feature type="chain" id="PRO_0000381784" description="Protein adenylyltransferase Fic">
    <location>
        <begin position="1"/>
        <end position="483"/>
    </location>
</feature>
<feature type="transmembrane region" description="Helical" evidence="4">
    <location>
        <begin position="20"/>
        <end position="42"/>
    </location>
</feature>
<feature type="repeat" description="TPR 1">
    <location>
        <begin position="107"/>
        <end position="140"/>
    </location>
</feature>
<feature type="repeat" description="TPR 2">
    <location>
        <begin position="141"/>
        <end position="175"/>
    </location>
</feature>
<feature type="domain" description="Fido" evidence="5">
    <location>
        <begin position="286"/>
        <end position="421"/>
    </location>
</feature>
<feature type="region of interest" description="Disordered" evidence="6">
    <location>
        <begin position="464"/>
        <end position="483"/>
    </location>
</feature>
<feature type="short sequence motif" description="Inhibitory (S/T)XXXE(G/N) motif">
    <location>
        <begin position="232"/>
        <end position="237"/>
    </location>
</feature>
<feature type="active site" evidence="1">
    <location>
        <position position="364"/>
    </location>
</feature>
<feature type="binding site" evidence="3">
    <location>
        <position position="236"/>
    </location>
    <ligand>
        <name>ATP</name>
        <dbReference type="ChEBI" id="CHEBI:30616"/>
    </ligand>
</feature>
<feature type="binding site" evidence="3">
    <location>
        <begin position="317"/>
        <end position="320"/>
    </location>
    <ligand>
        <name>ATP</name>
        <dbReference type="ChEBI" id="CHEBI:30616"/>
    </ligand>
</feature>
<feature type="binding site" evidence="3">
    <location>
        <begin position="368"/>
        <end position="375"/>
    </location>
    <ligand>
        <name>ATP</name>
        <dbReference type="ChEBI" id="CHEBI:30616"/>
    </ligand>
</feature>
<feature type="binding site" evidence="3">
    <location>
        <begin position="400"/>
        <end position="401"/>
    </location>
    <ligand>
        <name>ATP</name>
        <dbReference type="ChEBI" id="CHEBI:30616"/>
    </ligand>
</feature>
<feature type="binding site" evidence="3">
    <location>
        <position position="408"/>
    </location>
    <ligand>
        <name>ATP</name>
        <dbReference type="ChEBI" id="CHEBI:30616"/>
    </ligand>
</feature>
<feature type="site" description="Important for autoinhibition of adenylyltransferase activity" evidence="3">
    <location>
        <position position="236"/>
    </location>
</feature>
<comment type="function">
    <text evidence="1 2">Protein that can both mediate the addition of adenosine 5'-monophosphate (AMP) to specific residues of target proteins (AMPylation), and the removal of the same modification from target proteins (de-AMPylation), depending on the context (By similarity). The side chain of Glu-236 determines which of the two opposing activities (AMPylase or de-AMPylase) will take place (By similarity). Acts as a key regulator of the unfolded protein response (UPR) by mediating AMPylation or de-AMPylation of Hsc70-3/BiP. In unstressed cells, acts as an adenylyltransferase by mediating AMPylation of Hsc70-3/BiP at 'Thr-518', thereby inactivating it. In response to endoplasmic reticulum stress, acts as a phosphodiesterase by mediating removal of ATP (de-AMPylation) from Hsc70-3/BiP at 'Thr-518', leading to restore HSPA5/BiP activity (By similarity).</text>
</comment>
<comment type="catalytic activity">
    <reaction evidence="3">
        <text>L-tyrosyl-[protein] + ATP = O-(5'-adenylyl)-L-tyrosyl-[protein] + diphosphate</text>
        <dbReference type="Rhea" id="RHEA:54288"/>
        <dbReference type="Rhea" id="RHEA-COMP:10136"/>
        <dbReference type="Rhea" id="RHEA-COMP:13846"/>
        <dbReference type="ChEBI" id="CHEBI:30616"/>
        <dbReference type="ChEBI" id="CHEBI:33019"/>
        <dbReference type="ChEBI" id="CHEBI:46858"/>
        <dbReference type="ChEBI" id="CHEBI:83624"/>
        <dbReference type="EC" id="2.7.7.108"/>
    </reaction>
</comment>
<comment type="catalytic activity">
    <reaction evidence="2">
        <text>L-threonyl-[protein] + ATP = 3-O-(5'-adenylyl)-L-threonyl-[protein] + diphosphate</text>
        <dbReference type="Rhea" id="RHEA:54292"/>
        <dbReference type="Rhea" id="RHEA-COMP:11060"/>
        <dbReference type="Rhea" id="RHEA-COMP:13847"/>
        <dbReference type="ChEBI" id="CHEBI:30013"/>
        <dbReference type="ChEBI" id="CHEBI:30616"/>
        <dbReference type="ChEBI" id="CHEBI:33019"/>
        <dbReference type="ChEBI" id="CHEBI:138113"/>
        <dbReference type="EC" id="2.7.7.108"/>
    </reaction>
</comment>
<comment type="catalytic activity">
    <reaction evidence="2">
        <text>3-O-(5'-adenylyl)-L-threonyl-[protein] + H2O = L-threonyl-[protein] + AMP + H(+)</text>
        <dbReference type="Rhea" id="RHEA:55932"/>
        <dbReference type="Rhea" id="RHEA-COMP:11060"/>
        <dbReference type="Rhea" id="RHEA-COMP:13847"/>
        <dbReference type="ChEBI" id="CHEBI:15377"/>
        <dbReference type="ChEBI" id="CHEBI:15378"/>
        <dbReference type="ChEBI" id="CHEBI:30013"/>
        <dbReference type="ChEBI" id="CHEBI:138113"/>
        <dbReference type="ChEBI" id="CHEBI:456215"/>
    </reaction>
</comment>
<comment type="activity regulation">
    <text evidence="1 3">The side chain of Glu-236 determines which of the two opposing activities (AMPylase or de-AMPylase) will take place. In response to endoplasmic reticulum stress, mediates de-AMPylase activity (By similarity). Adenylyltransferase activity is inhibited by the inhibitory helix present at the N-terminus: Glu-236 binds ATP and competes with ATP-binding at Arg-375, thereby preventing adenylyltransferase activity (By similarity). In unstressed cells, disengagement of Glu-236 promotes adenylyltransferase activity (By similarity). Activation dissociates ATP-binding from Glu-236, allowing ordered binding of the entire ATP moiety with the alpha-phosphate in an orientation that is productive for accepting an incoming target hydroxyl side chain (By similarity).</text>
</comment>
<comment type="subunit">
    <text evidence="2">Homodimer.</text>
</comment>
<comment type="subcellular location">
    <subcellularLocation>
        <location evidence="2">Membrane</location>
        <topology evidence="2">Single-pass membrane protein</topology>
    </subcellularLocation>
</comment>
<comment type="domain">
    <text evidence="3">The fido domain mediates the adenylyltransferase activity.</text>
</comment>
<comment type="similarity">
    <text evidence="7">Belongs to the fic family.</text>
</comment>
<organism>
    <name type="scientific">Drosophila grimshawi</name>
    <name type="common">Hawaiian fruit fly</name>
    <name type="synonym">Idiomyia grimshawi</name>
    <dbReference type="NCBI Taxonomy" id="7222"/>
    <lineage>
        <taxon>Eukaryota</taxon>
        <taxon>Metazoa</taxon>
        <taxon>Ecdysozoa</taxon>
        <taxon>Arthropoda</taxon>
        <taxon>Hexapoda</taxon>
        <taxon>Insecta</taxon>
        <taxon>Pterygota</taxon>
        <taxon>Neoptera</taxon>
        <taxon>Endopterygota</taxon>
        <taxon>Diptera</taxon>
        <taxon>Brachycera</taxon>
        <taxon>Muscomorpha</taxon>
        <taxon>Ephydroidea</taxon>
        <taxon>Drosophilidae</taxon>
        <taxon>Drosophila</taxon>
        <taxon>Hawaiian Drosophila</taxon>
    </lineage>
</organism>
<keyword id="KW-0067">ATP-binding</keyword>
<keyword id="KW-0378">Hydrolase</keyword>
<keyword id="KW-0472">Membrane</keyword>
<keyword id="KW-0547">Nucleotide-binding</keyword>
<keyword id="KW-0548">Nucleotidyltransferase</keyword>
<keyword id="KW-1185">Reference proteome</keyword>
<keyword id="KW-0677">Repeat</keyword>
<keyword id="KW-0802">TPR repeat</keyword>
<keyword id="KW-0808">Transferase</keyword>
<keyword id="KW-0812">Transmembrane</keyword>
<keyword id="KW-1133">Transmembrane helix</keyword>
<sequence>METGKVTQEPKQMKFTYRFAFFFIAGSLATFVFHALTSSSSVSLFGWRLQLRQLHHLPTAHYLQTRDEFAVYSVDELNAFKEFYDKSVSDSVGASYTEAEQTNIKEALGAMRLALDMHISGKDDKAARLFEHALALAPKHPEVLLRYGEFLEHNQRNIVLADQYYFQALSISPSNSEAFANRQRTANVVQTLDERRLVSLDEKRDALSAIHEANAALRRAKKEAYFQHIYHSVGIEGNTMTLAQTRSVLETRMAVDGKSIDEHNEILGMDLAMKYINASLVQKLEITLKDILELHRRVLGHVDPIEGGEFRRTQVYVGGHVPPGPGDLALLMQRFEHWLNSEQSNSLHPVNYAALAHYKLVHIHPFIDGNGRTSRLLMNTLLMRAGYPPVIIPKQQRSQYYHFLKLANEGDIRPFVRFIADCTEKTLDLYLWATSDLPQQIPMLIQTESEGGVLAQLQSHIAQSAPEPYESGSGLDSGVNGMP</sequence>
<reference key="1">
    <citation type="journal article" date="2007" name="Nature">
        <title>Evolution of genes and genomes on the Drosophila phylogeny.</title>
        <authorList>
            <consortium name="Drosophila 12 genomes consortium"/>
        </authorList>
    </citation>
    <scope>NUCLEOTIDE SEQUENCE [LARGE SCALE GENOMIC DNA]</scope>
    <source>
        <strain>Tucson 15287-2541.00</strain>
    </source>
</reference>